<dbReference type="EC" id="2.1.2.1" evidence="1"/>
<dbReference type="EMBL" id="CP000539">
    <property type="protein sequence ID" value="ABM41851.1"/>
    <property type="molecule type" value="Genomic_DNA"/>
</dbReference>
<dbReference type="SMR" id="A1W6H6"/>
<dbReference type="STRING" id="232721.Ajs_1660"/>
<dbReference type="KEGG" id="ajs:Ajs_1660"/>
<dbReference type="eggNOG" id="COG0112">
    <property type="taxonomic scope" value="Bacteria"/>
</dbReference>
<dbReference type="HOGENOM" id="CLU_022477_2_1_4"/>
<dbReference type="UniPathway" id="UPA00193"/>
<dbReference type="UniPathway" id="UPA00288">
    <property type="reaction ID" value="UER01023"/>
</dbReference>
<dbReference type="Proteomes" id="UP000000645">
    <property type="component" value="Chromosome"/>
</dbReference>
<dbReference type="GO" id="GO:0005829">
    <property type="term" value="C:cytosol"/>
    <property type="evidence" value="ECO:0007669"/>
    <property type="project" value="TreeGrafter"/>
</dbReference>
<dbReference type="GO" id="GO:0004372">
    <property type="term" value="F:glycine hydroxymethyltransferase activity"/>
    <property type="evidence" value="ECO:0007669"/>
    <property type="project" value="UniProtKB-UniRule"/>
</dbReference>
<dbReference type="GO" id="GO:0030170">
    <property type="term" value="F:pyridoxal phosphate binding"/>
    <property type="evidence" value="ECO:0007669"/>
    <property type="project" value="UniProtKB-UniRule"/>
</dbReference>
<dbReference type="GO" id="GO:0019264">
    <property type="term" value="P:glycine biosynthetic process from serine"/>
    <property type="evidence" value="ECO:0007669"/>
    <property type="project" value="UniProtKB-UniRule"/>
</dbReference>
<dbReference type="GO" id="GO:0035999">
    <property type="term" value="P:tetrahydrofolate interconversion"/>
    <property type="evidence" value="ECO:0007669"/>
    <property type="project" value="UniProtKB-UniRule"/>
</dbReference>
<dbReference type="CDD" id="cd00378">
    <property type="entry name" value="SHMT"/>
    <property type="match status" value="1"/>
</dbReference>
<dbReference type="FunFam" id="3.40.640.10:FF:000001">
    <property type="entry name" value="Serine hydroxymethyltransferase"/>
    <property type="match status" value="1"/>
</dbReference>
<dbReference type="FunFam" id="3.90.1150.10:FF:000003">
    <property type="entry name" value="Serine hydroxymethyltransferase"/>
    <property type="match status" value="1"/>
</dbReference>
<dbReference type="Gene3D" id="3.90.1150.10">
    <property type="entry name" value="Aspartate Aminotransferase, domain 1"/>
    <property type="match status" value="1"/>
</dbReference>
<dbReference type="Gene3D" id="3.40.640.10">
    <property type="entry name" value="Type I PLP-dependent aspartate aminotransferase-like (Major domain)"/>
    <property type="match status" value="1"/>
</dbReference>
<dbReference type="HAMAP" id="MF_00051">
    <property type="entry name" value="SHMT"/>
    <property type="match status" value="1"/>
</dbReference>
<dbReference type="InterPro" id="IPR015424">
    <property type="entry name" value="PyrdxlP-dep_Trfase"/>
</dbReference>
<dbReference type="InterPro" id="IPR015421">
    <property type="entry name" value="PyrdxlP-dep_Trfase_major"/>
</dbReference>
<dbReference type="InterPro" id="IPR015422">
    <property type="entry name" value="PyrdxlP-dep_Trfase_small"/>
</dbReference>
<dbReference type="InterPro" id="IPR001085">
    <property type="entry name" value="Ser_HO-MeTrfase"/>
</dbReference>
<dbReference type="InterPro" id="IPR049943">
    <property type="entry name" value="Ser_HO-MeTrfase-like"/>
</dbReference>
<dbReference type="InterPro" id="IPR019798">
    <property type="entry name" value="Ser_HO-MeTrfase_PLP_BS"/>
</dbReference>
<dbReference type="InterPro" id="IPR039429">
    <property type="entry name" value="SHMT-like_dom"/>
</dbReference>
<dbReference type="NCBIfam" id="NF000586">
    <property type="entry name" value="PRK00011.1"/>
    <property type="match status" value="1"/>
</dbReference>
<dbReference type="PANTHER" id="PTHR11680">
    <property type="entry name" value="SERINE HYDROXYMETHYLTRANSFERASE"/>
    <property type="match status" value="1"/>
</dbReference>
<dbReference type="PANTHER" id="PTHR11680:SF50">
    <property type="entry name" value="SERINE HYDROXYMETHYLTRANSFERASE"/>
    <property type="match status" value="1"/>
</dbReference>
<dbReference type="Pfam" id="PF00464">
    <property type="entry name" value="SHMT"/>
    <property type="match status" value="1"/>
</dbReference>
<dbReference type="PIRSF" id="PIRSF000412">
    <property type="entry name" value="SHMT"/>
    <property type="match status" value="1"/>
</dbReference>
<dbReference type="SUPFAM" id="SSF53383">
    <property type="entry name" value="PLP-dependent transferases"/>
    <property type="match status" value="1"/>
</dbReference>
<dbReference type="PROSITE" id="PS00096">
    <property type="entry name" value="SHMT"/>
    <property type="match status" value="1"/>
</dbReference>
<reference key="1">
    <citation type="submission" date="2006-12" db="EMBL/GenBank/DDBJ databases">
        <title>Complete sequence of chromosome 1 of Acidovorax sp. JS42.</title>
        <authorList>
            <person name="Copeland A."/>
            <person name="Lucas S."/>
            <person name="Lapidus A."/>
            <person name="Barry K."/>
            <person name="Detter J.C."/>
            <person name="Glavina del Rio T."/>
            <person name="Dalin E."/>
            <person name="Tice H."/>
            <person name="Pitluck S."/>
            <person name="Chertkov O."/>
            <person name="Brettin T."/>
            <person name="Bruce D."/>
            <person name="Han C."/>
            <person name="Tapia R."/>
            <person name="Gilna P."/>
            <person name="Schmutz J."/>
            <person name="Larimer F."/>
            <person name="Land M."/>
            <person name="Hauser L."/>
            <person name="Kyrpides N."/>
            <person name="Kim E."/>
            <person name="Stahl D."/>
            <person name="Richardson P."/>
        </authorList>
    </citation>
    <scope>NUCLEOTIDE SEQUENCE [LARGE SCALE GENOMIC DNA]</scope>
    <source>
        <strain>JS42</strain>
    </source>
</reference>
<keyword id="KW-0028">Amino-acid biosynthesis</keyword>
<keyword id="KW-0963">Cytoplasm</keyword>
<keyword id="KW-0554">One-carbon metabolism</keyword>
<keyword id="KW-0663">Pyridoxal phosphate</keyword>
<keyword id="KW-0808">Transferase</keyword>
<protein>
    <recommendedName>
        <fullName evidence="1">Serine hydroxymethyltransferase</fullName>
        <shortName evidence="1">SHMT</shortName>
        <shortName evidence="1">Serine methylase</shortName>
        <ecNumber evidence="1">2.1.2.1</ecNumber>
    </recommendedName>
</protein>
<sequence length="414" mass="45233">MYQRNILVEQTDPEVWAAIQAEDRRQEEHIELIASENYASPAVMAAQGSQLTNKYAEGYPGKRYYGGCENVDVIEQLAIDRIKQLFGAEAANVQPNSGSQANQAVLMAFLKPGDTILGMSLAEGGHLTHGMPLNMSGKWFNVVSYGLNDKEEIDYDALEAKAREHKPKLIIAGASAYALRIDFERFAKIAKEVGAIFWVDIAHYAGLVVAGEYPNPVPFADVVTSTTHKSLRGPRGGIILMKAEHEKAINSAIFPGLQGGPLEHVIAAKAVAFKEALSPEFKQYQQQVTKNAKVFAETLIQRGLRIVSGRTESHVMLVDLRAKGITGKEAEAALGKAHITINKNAIPNDPEKPMVTSGIRVGTPAITTRGFKEEETRLTANLVADVLDNPHDEANLEAVRAKVHALTSRFPVYR</sequence>
<comment type="function">
    <text evidence="1">Catalyzes the reversible interconversion of serine and glycine with tetrahydrofolate (THF) serving as the one-carbon carrier. This reaction serves as the major source of one-carbon groups required for the biosynthesis of purines, thymidylate, methionine, and other important biomolecules. Also exhibits THF-independent aldolase activity toward beta-hydroxyamino acids, producing glycine and aldehydes, via a retro-aldol mechanism.</text>
</comment>
<comment type="catalytic activity">
    <reaction evidence="1">
        <text>(6R)-5,10-methylene-5,6,7,8-tetrahydrofolate + glycine + H2O = (6S)-5,6,7,8-tetrahydrofolate + L-serine</text>
        <dbReference type="Rhea" id="RHEA:15481"/>
        <dbReference type="ChEBI" id="CHEBI:15377"/>
        <dbReference type="ChEBI" id="CHEBI:15636"/>
        <dbReference type="ChEBI" id="CHEBI:33384"/>
        <dbReference type="ChEBI" id="CHEBI:57305"/>
        <dbReference type="ChEBI" id="CHEBI:57453"/>
        <dbReference type="EC" id="2.1.2.1"/>
    </reaction>
</comment>
<comment type="cofactor">
    <cofactor evidence="1">
        <name>pyridoxal 5'-phosphate</name>
        <dbReference type="ChEBI" id="CHEBI:597326"/>
    </cofactor>
</comment>
<comment type="pathway">
    <text evidence="1">One-carbon metabolism; tetrahydrofolate interconversion.</text>
</comment>
<comment type="pathway">
    <text evidence="1">Amino-acid biosynthesis; glycine biosynthesis; glycine from L-serine: step 1/1.</text>
</comment>
<comment type="subunit">
    <text evidence="1">Homodimer.</text>
</comment>
<comment type="subcellular location">
    <subcellularLocation>
        <location evidence="1">Cytoplasm</location>
    </subcellularLocation>
</comment>
<comment type="similarity">
    <text evidence="1">Belongs to the SHMT family.</text>
</comment>
<feature type="chain" id="PRO_1000006211" description="Serine hydroxymethyltransferase">
    <location>
        <begin position="1"/>
        <end position="414"/>
    </location>
</feature>
<feature type="binding site" evidence="1">
    <location>
        <position position="121"/>
    </location>
    <ligand>
        <name>(6S)-5,6,7,8-tetrahydrofolate</name>
        <dbReference type="ChEBI" id="CHEBI:57453"/>
    </ligand>
</feature>
<feature type="binding site" evidence="1">
    <location>
        <begin position="125"/>
        <end position="127"/>
    </location>
    <ligand>
        <name>(6S)-5,6,7,8-tetrahydrofolate</name>
        <dbReference type="ChEBI" id="CHEBI:57453"/>
    </ligand>
</feature>
<feature type="site" description="Plays an important role in substrate specificity" evidence="1">
    <location>
        <position position="228"/>
    </location>
</feature>
<feature type="modified residue" description="N6-(pyridoxal phosphate)lysine" evidence="1">
    <location>
        <position position="229"/>
    </location>
</feature>
<evidence type="ECO:0000255" key="1">
    <source>
        <dbReference type="HAMAP-Rule" id="MF_00051"/>
    </source>
</evidence>
<name>GLYA_ACISJ</name>
<accession>A1W6H6</accession>
<organism>
    <name type="scientific">Acidovorax sp. (strain JS42)</name>
    <dbReference type="NCBI Taxonomy" id="232721"/>
    <lineage>
        <taxon>Bacteria</taxon>
        <taxon>Pseudomonadati</taxon>
        <taxon>Pseudomonadota</taxon>
        <taxon>Betaproteobacteria</taxon>
        <taxon>Burkholderiales</taxon>
        <taxon>Comamonadaceae</taxon>
        <taxon>Acidovorax</taxon>
    </lineage>
</organism>
<proteinExistence type="inferred from homology"/>
<gene>
    <name evidence="1" type="primary">glyA</name>
    <name type="ordered locus">Ajs_1660</name>
</gene>